<feature type="chain" id="PRO_0000149813" description="Putative multi-protein-binding factor 1">
    <location>
        <begin position="1"/>
        <end position="152"/>
    </location>
</feature>
<feature type="domain" description="HTH cro/C1-type" evidence="2">
    <location>
        <begin position="86"/>
        <end position="140"/>
    </location>
</feature>
<feature type="DNA-binding region" description="H-T-H motif" evidence="2">
    <location>
        <begin position="97"/>
        <end position="116"/>
    </location>
</feature>
<feature type="region of interest" description="Disordered" evidence="3">
    <location>
        <begin position="1"/>
        <end position="24"/>
    </location>
</feature>
<proteinExistence type="inferred from homology"/>
<comment type="function">
    <text evidence="1">Transcriptional coactivator that stimulates GCN4-dependent transcriptional activity by bridging the DNA-binding region of GCN4 and TBP (SPT15), thereby recruiting TBP to GCN4-bound promoters. Involved in induction of the ribosome quality control (RQC) pathway; a pathway that degrades nascent peptide chains during problematic translation. Required to prevent stalled ribosomes from frameshifting.</text>
</comment>
<comment type="similarity">
    <text evidence="4">Belongs to the MBF1 family.</text>
</comment>
<evidence type="ECO:0000250" key="1">
    <source>
        <dbReference type="UniProtKB" id="O14467"/>
    </source>
</evidence>
<evidence type="ECO:0000255" key="2">
    <source>
        <dbReference type="PROSITE-ProRule" id="PRU00257"/>
    </source>
</evidence>
<evidence type="ECO:0000256" key="3">
    <source>
        <dbReference type="SAM" id="MobiDB-lite"/>
    </source>
</evidence>
<evidence type="ECO:0000305" key="4"/>
<dbReference type="EMBL" id="AF490972">
    <property type="protein sequence ID" value="AAM08408.1"/>
    <property type="molecule type" value="Genomic_DNA"/>
</dbReference>
<dbReference type="EMBL" id="CR382128">
    <property type="protein sequence ID" value="CAG83039.1"/>
    <property type="molecule type" value="Genomic_DNA"/>
</dbReference>
<dbReference type="RefSeq" id="XP_500788.1">
    <property type="nucleotide sequence ID" value="XM_500788.1"/>
</dbReference>
<dbReference type="SMR" id="Q8TG23"/>
<dbReference type="FunCoup" id="Q8TG23">
    <property type="interactions" value="780"/>
</dbReference>
<dbReference type="STRING" id="284591.Q8TG23"/>
<dbReference type="EnsemblFungi" id="CAG83039">
    <property type="protein sequence ID" value="CAG83039"/>
    <property type="gene ID" value="YALI0_B12166g"/>
</dbReference>
<dbReference type="KEGG" id="yli:2907617"/>
<dbReference type="VEuPathDB" id="FungiDB:YALI0_B12166g"/>
<dbReference type="HOGENOM" id="CLU_112609_0_1_1"/>
<dbReference type="InParanoid" id="Q8TG23"/>
<dbReference type="OMA" id="GKNKSCK"/>
<dbReference type="OrthoDB" id="108417at4891"/>
<dbReference type="Proteomes" id="UP000001300">
    <property type="component" value="Chromosome B"/>
</dbReference>
<dbReference type="GO" id="GO:0005737">
    <property type="term" value="C:cytoplasm"/>
    <property type="evidence" value="ECO:0007669"/>
    <property type="project" value="EnsemblFungi"/>
</dbReference>
<dbReference type="GO" id="GO:0005634">
    <property type="term" value="C:nucleus"/>
    <property type="evidence" value="ECO:0000318"/>
    <property type="project" value="GO_Central"/>
</dbReference>
<dbReference type="GO" id="GO:0003677">
    <property type="term" value="F:DNA binding"/>
    <property type="evidence" value="ECO:0007669"/>
    <property type="project" value="UniProtKB-KW"/>
</dbReference>
<dbReference type="GO" id="GO:0043022">
    <property type="term" value="F:ribosome binding"/>
    <property type="evidence" value="ECO:0007669"/>
    <property type="project" value="EnsemblFungi"/>
</dbReference>
<dbReference type="GO" id="GO:0140469">
    <property type="term" value="P:GCN2-mediated signaling"/>
    <property type="evidence" value="ECO:0007669"/>
    <property type="project" value="EnsemblFungi"/>
</dbReference>
<dbReference type="GO" id="GO:1990145">
    <property type="term" value="P:maintenance of translational fidelity"/>
    <property type="evidence" value="ECO:0007669"/>
    <property type="project" value="EnsemblFungi"/>
</dbReference>
<dbReference type="GO" id="GO:0072344">
    <property type="term" value="P:rescue of stalled ribosome"/>
    <property type="evidence" value="ECO:0007669"/>
    <property type="project" value="EnsemblFungi"/>
</dbReference>
<dbReference type="CDD" id="cd00093">
    <property type="entry name" value="HTH_XRE"/>
    <property type="match status" value="1"/>
</dbReference>
<dbReference type="FunFam" id="1.10.260.40:FF:000015">
    <property type="entry name" value="Endothelial differentiation-related factor 1"/>
    <property type="match status" value="1"/>
</dbReference>
<dbReference type="Gene3D" id="1.10.260.40">
    <property type="entry name" value="lambda repressor-like DNA-binding domains"/>
    <property type="match status" value="1"/>
</dbReference>
<dbReference type="InterPro" id="IPR001387">
    <property type="entry name" value="Cro/C1-type_HTH"/>
</dbReference>
<dbReference type="InterPro" id="IPR010982">
    <property type="entry name" value="Lambda_DNA-bd_dom_sf"/>
</dbReference>
<dbReference type="InterPro" id="IPR013729">
    <property type="entry name" value="MBF1_N"/>
</dbReference>
<dbReference type="PANTHER" id="PTHR10245:SF15">
    <property type="entry name" value="ENDOTHELIAL DIFFERENTIATION-RELATED FACTOR 1"/>
    <property type="match status" value="1"/>
</dbReference>
<dbReference type="PANTHER" id="PTHR10245">
    <property type="entry name" value="ENDOTHELIAL DIFFERENTIATION-RELATED FACTOR 1 MULTIPROTEIN BRIDGING FACTOR 1"/>
    <property type="match status" value="1"/>
</dbReference>
<dbReference type="Pfam" id="PF01381">
    <property type="entry name" value="HTH_3"/>
    <property type="match status" value="1"/>
</dbReference>
<dbReference type="Pfam" id="PF08523">
    <property type="entry name" value="MBF1"/>
    <property type="match status" value="1"/>
</dbReference>
<dbReference type="SMART" id="SM00530">
    <property type="entry name" value="HTH_XRE"/>
    <property type="match status" value="1"/>
</dbReference>
<dbReference type="SUPFAM" id="SSF47413">
    <property type="entry name" value="lambda repressor-like DNA-binding domains"/>
    <property type="match status" value="1"/>
</dbReference>
<dbReference type="PROSITE" id="PS50943">
    <property type="entry name" value="HTH_CROC1"/>
    <property type="match status" value="1"/>
</dbReference>
<protein>
    <recommendedName>
        <fullName>Putative multi-protein-binding factor 1</fullName>
    </recommendedName>
    <alternativeName>
        <fullName>Protein YlMBF1</fullName>
    </alternativeName>
</protein>
<keyword id="KW-0010">Activator</keyword>
<keyword id="KW-0238">DNA-binding</keyword>
<keyword id="KW-1185">Reference proteome</keyword>
<keyword id="KW-0804">Transcription</keyword>
<keyword id="KW-0805">Transcription regulation</keyword>
<name>MBF1_YARLI</name>
<accession>Q8TG23</accession>
<accession>Q6CEX4</accession>
<organism>
    <name type="scientific">Yarrowia lipolytica (strain CLIB 122 / E 150)</name>
    <name type="common">Yeast</name>
    <name type="synonym">Candida lipolytica</name>
    <dbReference type="NCBI Taxonomy" id="284591"/>
    <lineage>
        <taxon>Eukaryota</taxon>
        <taxon>Fungi</taxon>
        <taxon>Dikarya</taxon>
        <taxon>Ascomycota</taxon>
        <taxon>Saccharomycotina</taxon>
        <taxon>Dipodascomycetes</taxon>
        <taxon>Dipodascales</taxon>
        <taxon>Dipodascales incertae sedis</taxon>
        <taxon>Yarrowia</taxon>
    </lineage>
</organism>
<reference key="1">
    <citation type="submission" date="2002-03" db="EMBL/GenBank/DDBJ databases">
        <title>Cloning and characterization of MBF1 in Yarrowia lipolytica.</title>
        <authorList>
            <person name="Kim J."/>
            <person name="Cheon S.A."/>
            <person name="Song Y."/>
            <person name="Kim J.-Y."/>
        </authorList>
    </citation>
    <scope>NUCLEOTIDE SEQUENCE [GENOMIC DNA]</scope>
    <source>
        <strain>SMS397A</strain>
    </source>
</reference>
<reference key="2">
    <citation type="journal article" date="2004" name="Nature">
        <title>Genome evolution in yeasts.</title>
        <authorList>
            <person name="Dujon B."/>
            <person name="Sherman D."/>
            <person name="Fischer G."/>
            <person name="Durrens P."/>
            <person name="Casaregola S."/>
            <person name="Lafontaine I."/>
            <person name="de Montigny J."/>
            <person name="Marck C."/>
            <person name="Neuveglise C."/>
            <person name="Talla E."/>
            <person name="Goffard N."/>
            <person name="Frangeul L."/>
            <person name="Aigle M."/>
            <person name="Anthouard V."/>
            <person name="Babour A."/>
            <person name="Barbe V."/>
            <person name="Barnay S."/>
            <person name="Blanchin S."/>
            <person name="Beckerich J.-M."/>
            <person name="Beyne E."/>
            <person name="Bleykasten C."/>
            <person name="Boisrame A."/>
            <person name="Boyer J."/>
            <person name="Cattolico L."/>
            <person name="Confanioleri F."/>
            <person name="de Daruvar A."/>
            <person name="Despons L."/>
            <person name="Fabre E."/>
            <person name="Fairhead C."/>
            <person name="Ferry-Dumazet H."/>
            <person name="Groppi A."/>
            <person name="Hantraye F."/>
            <person name="Hennequin C."/>
            <person name="Jauniaux N."/>
            <person name="Joyet P."/>
            <person name="Kachouri R."/>
            <person name="Kerrest A."/>
            <person name="Koszul R."/>
            <person name="Lemaire M."/>
            <person name="Lesur I."/>
            <person name="Ma L."/>
            <person name="Muller H."/>
            <person name="Nicaud J.-M."/>
            <person name="Nikolski M."/>
            <person name="Oztas S."/>
            <person name="Ozier-Kalogeropoulos O."/>
            <person name="Pellenz S."/>
            <person name="Potier S."/>
            <person name="Richard G.-F."/>
            <person name="Straub M.-L."/>
            <person name="Suleau A."/>
            <person name="Swennen D."/>
            <person name="Tekaia F."/>
            <person name="Wesolowski-Louvel M."/>
            <person name="Westhof E."/>
            <person name="Wirth B."/>
            <person name="Zeniou-Meyer M."/>
            <person name="Zivanovic Y."/>
            <person name="Bolotin-Fukuhara M."/>
            <person name="Thierry A."/>
            <person name="Bouchier C."/>
            <person name="Caudron B."/>
            <person name="Scarpelli C."/>
            <person name="Gaillardin C."/>
            <person name="Weissenbach J."/>
            <person name="Wincker P."/>
            <person name="Souciet J.-L."/>
        </authorList>
    </citation>
    <scope>NUCLEOTIDE SEQUENCE [LARGE SCALE GENOMIC DNA]</scope>
    <source>
        <strain>CLIB 122 / E 150</strain>
    </source>
</reference>
<sequence>MSDDWESKTVIGSRARVGGGGPRATVAKTQAEINAAMRSGNVLSTDKKYASANSKDGGDGQRLTKIDRSDDIIAPPKVEASVGKAIIKGRSEKGLTQKELAVKINEKPQVVNDYESGRAQPNQQVLSKMERVLGIKLRGKDIGLPLGPKGKK</sequence>
<gene>
    <name type="primary">MBF1</name>
    <name type="synonym">ylMBF1</name>
    <name type="ordered locus">YALI0B12166g</name>
</gene>